<reference key="1">
    <citation type="journal article" date="2003" name="Nucleic Acids Res.">
        <title>The complete nucleotide sequence of the hornwort (Anthoceros formosae) chloroplast genome: insight into the earliest land plants.</title>
        <authorList>
            <person name="Kugita M."/>
            <person name="Kaneko A."/>
            <person name="Yamamoto Y."/>
            <person name="Takeya Y."/>
            <person name="Matsumoto T."/>
            <person name="Yoshinaga K."/>
        </authorList>
    </citation>
    <scope>NUCLEOTIDE SEQUENCE [LARGE SCALE GENOMIC DNA]</scope>
    <scope>RNA EDITING</scope>
</reference>
<reference key="2">
    <citation type="journal article" date="2003" name="Nucleic Acids Res.">
        <title>RNA editing in hornwort chloroplasts makes more than half the genes functional.</title>
        <authorList>
            <person name="Kugita M."/>
            <person name="Yamamoto Y."/>
            <person name="Fujikawa T."/>
            <person name="Matsumoto T."/>
            <person name="Yoshinaga K."/>
        </authorList>
    </citation>
    <scope>NUCLEOTIDE SEQUENCE [MRNA]</scope>
    <scope>RNA EDITING</scope>
    <source>
        <tissue>Thallus</tissue>
    </source>
</reference>
<organism>
    <name type="scientific">Anthoceros angustus</name>
    <name type="common">Hornwort</name>
    <name type="synonym">Anthoceros formosae</name>
    <dbReference type="NCBI Taxonomy" id="48387"/>
    <lineage>
        <taxon>Eukaryota</taxon>
        <taxon>Viridiplantae</taxon>
        <taxon>Streptophyta</taxon>
        <taxon>Embryophyta</taxon>
        <taxon>Anthocerotophyta</taxon>
        <taxon>Anthocerotopsida</taxon>
        <taxon>Anthocerotidae</taxon>
        <taxon>Anthocerotales</taxon>
        <taxon>Anthocerotaceae</taxon>
        <taxon>Anthoceros</taxon>
    </lineage>
</organism>
<protein>
    <recommendedName>
        <fullName evidence="1">Large ribosomal subunit protein bL21c</fullName>
    </recommendedName>
    <alternativeName>
        <fullName evidence="4">50S ribosomal protein L21, chloroplastic</fullName>
    </alternativeName>
</protein>
<geneLocation type="chloroplast"/>
<accession>Q85AT7</accession>
<name>RK21_ANTAG</name>
<keyword id="KW-0150">Chloroplast</keyword>
<keyword id="KW-0934">Plastid</keyword>
<keyword id="KW-0687">Ribonucleoprotein</keyword>
<keyword id="KW-0689">Ribosomal protein</keyword>
<keyword id="KW-0691">RNA editing</keyword>
<keyword id="KW-0694">RNA-binding</keyword>
<keyword id="KW-0699">rRNA-binding</keyword>
<sequence length="118" mass="13926">MNTYAIIDTGGEQLRVEPGRFYDMRHFTLLNPSILDSNTKVLIYRVLMIHHESNIALGDSWLEDATIKGRVLHSHFKDKITIYKMRSKKKMRRKLGYRLNLARFVVDSICFDGKEFYK</sequence>
<dbReference type="EMBL" id="AB086179">
    <property type="protein sequence ID" value="BAC55397.1"/>
    <property type="molecule type" value="Genomic_DNA"/>
</dbReference>
<dbReference type="EMBL" id="AB087482">
    <property type="protein sequence ID" value="BAC55497.1"/>
    <property type="molecule type" value="mRNA"/>
</dbReference>
<dbReference type="RefSeq" id="NP_777460.1">
    <property type="nucleotide sequence ID" value="NC_004543.1"/>
</dbReference>
<dbReference type="SMR" id="Q85AT7"/>
<dbReference type="GeneID" id="2553416"/>
<dbReference type="GO" id="GO:0009507">
    <property type="term" value="C:chloroplast"/>
    <property type="evidence" value="ECO:0007669"/>
    <property type="project" value="UniProtKB-SubCell"/>
</dbReference>
<dbReference type="GO" id="GO:1990904">
    <property type="term" value="C:ribonucleoprotein complex"/>
    <property type="evidence" value="ECO:0007669"/>
    <property type="project" value="UniProtKB-KW"/>
</dbReference>
<dbReference type="GO" id="GO:0005840">
    <property type="term" value="C:ribosome"/>
    <property type="evidence" value="ECO:0007669"/>
    <property type="project" value="UniProtKB-KW"/>
</dbReference>
<dbReference type="GO" id="GO:0019843">
    <property type="term" value="F:rRNA binding"/>
    <property type="evidence" value="ECO:0007669"/>
    <property type="project" value="UniProtKB-UniRule"/>
</dbReference>
<dbReference type="GO" id="GO:0003735">
    <property type="term" value="F:structural constituent of ribosome"/>
    <property type="evidence" value="ECO:0007669"/>
    <property type="project" value="InterPro"/>
</dbReference>
<dbReference type="GO" id="GO:0006412">
    <property type="term" value="P:translation"/>
    <property type="evidence" value="ECO:0007669"/>
    <property type="project" value="UniProtKB-UniRule"/>
</dbReference>
<dbReference type="HAMAP" id="MF_01363">
    <property type="entry name" value="Ribosomal_bL21"/>
    <property type="match status" value="1"/>
</dbReference>
<dbReference type="InterPro" id="IPR028909">
    <property type="entry name" value="bL21-like"/>
</dbReference>
<dbReference type="InterPro" id="IPR036164">
    <property type="entry name" value="bL21-like_sf"/>
</dbReference>
<dbReference type="InterPro" id="IPR001787">
    <property type="entry name" value="Ribosomal_bL21"/>
</dbReference>
<dbReference type="NCBIfam" id="TIGR00061">
    <property type="entry name" value="L21"/>
    <property type="match status" value="1"/>
</dbReference>
<dbReference type="Pfam" id="PF00829">
    <property type="entry name" value="Ribosomal_L21p"/>
    <property type="match status" value="1"/>
</dbReference>
<dbReference type="SUPFAM" id="SSF141091">
    <property type="entry name" value="L21p-like"/>
    <property type="match status" value="1"/>
</dbReference>
<comment type="function">
    <text evidence="1">This protein binds to 23S rRNA.</text>
</comment>
<comment type="subunit">
    <text evidence="1">Part of the 50S ribosomal subunit.</text>
</comment>
<comment type="subcellular location">
    <subcellularLocation>
        <location>Plastid</location>
        <location>Chloroplast</location>
    </subcellularLocation>
</comment>
<comment type="RNA editing">
    <location>
        <position position="15" evidence="2 3"/>
    </location>
    <location>
        <position position="53" evidence="2 3"/>
    </location>
    <location>
        <position position="60" evidence="2 3"/>
    </location>
    <location>
        <position position="61" evidence="2 3"/>
    </location>
    <location>
        <position position="93" evidence="2 3"/>
    </location>
    <location>
        <position position="103" evidence="2 3"/>
    </location>
    <location>
        <position position="104" evidence="2 3"/>
    </location>
    <location>
        <position position="108" evidence="2 3"/>
    </location>
    <location>
        <position position="109" evidence="2 3"/>
    </location>
    <text>The nonsense codons at positions 15, 93 and 104 are modified to sense codons.</text>
</comment>
<comment type="similarity">
    <text evidence="1">Belongs to the bacterial ribosomal protein bL21 family.</text>
</comment>
<gene>
    <name evidence="1" type="primary">rpl21</name>
</gene>
<feature type="chain" id="PRO_0000181022" description="Large ribosomal subunit protein bL21c">
    <location>
        <begin position="1"/>
        <end position="118"/>
    </location>
</feature>
<evidence type="ECO:0000255" key="1">
    <source>
        <dbReference type="HAMAP-Rule" id="MF_01363"/>
    </source>
</evidence>
<evidence type="ECO:0000269" key="2">
    <source>
    </source>
</evidence>
<evidence type="ECO:0000269" key="3">
    <source>
    </source>
</evidence>
<evidence type="ECO:0000305" key="4"/>
<proteinExistence type="evidence at transcript level"/>